<proteinExistence type="inferred from homology"/>
<accession>Q6GG20</accession>
<evidence type="ECO:0000255" key="1">
    <source>
        <dbReference type="HAMAP-Rule" id="MF_00440"/>
    </source>
</evidence>
<feature type="chain" id="PRO_0000182347" description="Transcriptional repressor NrdR">
    <location>
        <begin position="1"/>
        <end position="156"/>
    </location>
</feature>
<feature type="domain" description="ATP-cone" evidence="1">
    <location>
        <begin position="49"/>
        <end position="139"/>
    </location>
</feature>
<feature type="zinc finger region" evidence="1">
    <location>
        <begin position="3"/>
        <end position="34"/>
    </location>
</feature>
<protein>
    <recommendedName>
        <fullName evidence="1">Transcriptional repressor NrdR</fullName>
    </recommendedName>
</protein>
<organism>
    <name type="scientific">Staphylococcus aureus (strain MRSA252)</name>
    <dbReference type="NCBI Taxonomy" id="282458"/>
    <lineage>
        <taxon>Bacteria</taxon>
        <taxon>Bacillati</taxon>
        <taxon>Bacillota</taxon>
        <taxon>Bacilli</taxon>
        <taxon>Bacillales</taxon>
        <taxon>Staphylococcaceae</taxon>
        <taxon>Staphylococcus</taxon>
    </lineage>
</organism>
<gene>
    <name evidence="1" type="primary">nrdR</name>
    <name type="ordered locus">SAR1765</name>
</gene>
<comment type="function">
    <text evidence="1">Negatively regulates transcription of bacterial ribonucleotide reductase nrd genes and operons by binding to NrdR-boxes.</text>
</comment>
<comment type="cofactor">
    <cofactor evidence="1">
        <name>Zn(2+)</name>
        <dbReference type="ChEBI" id="CHEBI:29105"/>
    </cofactor>
    <text evidence="1">Binds 1 zinc ion.</text>
</comment>
<comment type="similarity">
    <text evidence="1">Belongs to the NrdR family.</text>
</comment>
<sequence length="156" mass="18204">MKCPKCNSTQSKVVDSRHADELNAIRRRRECENCGTRFTTFEHIEVSQLIVVKKDGTREQFSREKILNGLVRSCEKRPVRYQQLEDITNKVEWQLRDEGHTEVSSRDIGEHVMNLLMHVDQVSYVRFASVYKEFKDVDQLLASMQGILSENKRSDA</sequence>
<dbReference type="EMBL" id="BX571856">
    <property type="protein sequence ID" value="CAG40756.1"/>
    <property type="molecule type" value="Genomic_DNA"/>
</dbReference>
<dbReference type="RefSeq" id="WP_000650082.1">
    <property type="nucleotide sequence ID" value="NC_002952.2"/>
</dbReference>
<dbReference type="SMR" id="Q6GG20"/>
<dbReference type="GeneID" id="66839865"/>
<dbReference type="KEGG" id="sar:SAR1765"/>
<dbReference type="HOGENOM" id="CLU_108412_0_0_9"/>
<dbReference type="Proteomes" id="UP000000596">
    <property type="component" value="Chromosome"/>
</dbReference>
<dbReference type="GO" id="GO:0005524">
    <property type="term" value="F:ATP binding"/>
    <property type="evidence" value="ECO:0007669"/>
    <property type="project" value="UniProtKB-KW"/>
</dbReference>
<dbReference type="GO" id="GO:0003677">
    <property type="term" value="F:DNA binding"/>
    <property type="evidence" value="ECO:0007669"/>
    <property type="project" value="UniProtKB-KW"/>
</dbReference>
<dbReference type="GO" id="GO:0008270">
    <property type="term" value="F:zinc ion binding"/>
    <property type="evidence" value="ECO:0007669"/>
    <property type="project" value="UniProtKB-UniRule"/>
</dbReference>
<dbReference type="GO" id="GO:0045892">
    <property type="term" value="P:negative regulation of DNA-templated transcription"/>
    <property type="evidence" value="ECO:0007669"/>
    <property type="project" value="UniProtKB-UniRule"/>
</dbReference>
<dbReference type="HAMAP" id="MF_00440">
    <property type="entry name" value="NrdR"/>
    <property type="match status" value="1"/>
</dbReference>
<dbReference type="InterPro" id="IPR005144">
    <property type="entry name" value="ATP-cone_dom"/>
</dbReference>
<dbReference type="InterPro" id="IPR055173">
    <property type="entry name" value="NrdR-like_N"/>
</dbReference>
<dbReference type="InterPro" id="IPR003796">
    <property type="entry name" value="RNR_NrdR-like"/>
</dbReference>
<dbReference type="NCBIfam" id="TIGR00244">
    <property type="entry name" value="transcriptional regulator NrdR"/>
    <property type="match status" value="1"/>
</dbReference>
<dbReference type="PANTHER" id="PTHR30455">
    <property type="entry name" value="TRANSCRIPTIONAL REPRESSOR NRDR"/>
    <property type="match status" value="1"/>
</dbReference>
<dbReference type="PANTHER" id="PTHR30455:SF2">
    <property type="entry name" value="TRANSCRIPTIONAL REPRESSOR NRDR"/>
    <property type="match status" value="1"/>
</dbReference>
<dbReference type="Pfam" id="PF03477">
    <property type="entry name" value="ATP-cone"/>
    <property type="match status" value="1"/>
</dbReference>
<dbReference type="Pfam" id="PF22811">
    <property type="entry name" value="Zn_ribbon_NrdR"/>
    <property type="match status" value="1"/>
</dbReference>
<dbReference type="PROSITE" id="PS51161">
    <property type="entry name" value="ATP_CONE"/>
    <property type="match status" value="1"/>
</dbReference>
<keyword id="KW-0067">ATP-binding</keyword>
<keyword id="KW-0238">DNA-binding</keyword>
<keyword id="KW-0479">Metal-binding</keyword>
<keyword id="KW-0547">Nucleotide-binding</keyword>
<keyword id="KW-0678">Repressor</keyword>
<keyword id="KW-0804">Transcription</keyword>
<keyword id="KW-0805">Transcription regulation</keyword>
<keyword id="KW-0862">Zinc</keyword>
<keyword id="KW-0863">Zinc-finger</keyword>
<name>NRDR_STAAR</name>
<reference key="1">
    <citation type="journal article" date="2004" name="Proc. Natl. Acad. Sci. U.S.A.">
        <title>Complete genomes of two clinical Staphylococcus aureus strains: evidence for the rapid evolution of virulence and drug resistance.</title>
        <authorList>
            <person name="Holden M.T.G."/>
            <person name="Feil E.J."/>
            <person name="Lindsay J.A."/>
            <person name="Peacock S.J."/>
            <person name="Day N.P.J."/>
            <person name="Enright M.C."/>
            <person name="Foster T.J."/>
            <person name="Moore C.E."/>
            <person name="Hurst L."/>
            <person name="Atkin R."/>
            <person name="Barron A."/>
            <person name="Bason N."/>
            <person name="Bentley S.D."/>
            <person name="Chillingworth C."/>
            <person name="Chillingworth T."/>
            <person name="Churcher C."/>
            <person name="Clark L."/>
            <person name="Corton C."/>
            <person name="Cronin A."/>
            <person name="Doggett J."/>
            <person name="Dowd L."/>
            <person name="Feltwell T."/>
            <person name="Hance Z."/>
            <person name="Harris B."/>
            <person name="Hauser H."/>
            <person name="Holroyd S."/>
            <person name="Jagels K."/>
            <person name="James K.D."/>
            <person name="Lennard N."/>
            <person name="Line A."/>
            <person name="Mayes R."/>
            <person name="Moule S."/>
            <person name="Mungall K."/>
            <person name="Ormond D."/>
            <person name="Quail M.A."/>
            <person name="Rabbinowitsch E."/>
            <person name="Rutherford K.M."/>
            <person name="Sanders M."/>
            <person name="Sharp S."/>
            <person name="Simmonds M."/>
            <person name="Stevens K."/>
            <person name="Whitehead S."/>
            <person name="Barrell B.G."/>
            <person name="Spratt B.G."/>
            <person name="Parkhill J."/>
        </authorList>
    </citation>
    <scope>NUCLEOTIDE SEQUENCE [LARGE SCALE GENOMIC DNA]</scope>
    <source>
        <strain>MRSA252</strain>
    </source>
</reference>